<accession>B7UZU5</accession>
<gene>
    <name evidence="1" type="primary">sthA</name>
    <name type="ordered locus">PLES_20711</name>
</gene>
<keyword id="KW-0963">Cytoplasm</keyword>
<keyword id="KW-0274">FAD</keyword>
<keyword id="KW-0285">Flavoprotein</keyword>
<keyword id="KW-0520">NAD</keyword>
<keyword id="KW-0521">NADP</keyword>
<keyword id="KW-0560">Oxidoreductase</keyword>
<comment type="function">
    <text evidence="1">Conversion of NADPH, generated by peripheral catabolic pathways, to NADH, which can enter the respiratory chain for energy generation.</text>
</comment>
<comment type="catalytic activity">
    <reaction evidence="1">
        <text>NAD(+) + NADPH = NADH + NADP(+)</text>
        <dbReference type="Rhea" id="RHEA:11692"/>
        <dbReference type="ChEBI" id="CHEBI:57540"/>
        <dbReference type="ChEBI" id="CHEBI:57783"/>
        <dbReference type="ChEBI" id="CHEBI:57945"/>
        <dbReference type="ChEBI" id="CHEBI:58349"/>
        <dbReference type="EC" id="1.6.1.1"/>
    </reaction>
</comment>
<comment type="cofactor">
    <cofactor evidence="1">
        <name>FAD</name>
        <dbReference type="ChEBI" id="CHEBI:57692"/>
    </cofactor>
    <text evidence="1">Binds 1 FAD per subunit.</text>
</comment>
<comment type="subcellular location">
    <subcellularLocation>
        <location evidence="1">Cytoplasm</location>
    </subcellularLocation>
</comment>
<comment type="similarity">
    <text evidence="1">Belongs to the class-I pyridine nucleotide-disulfide oxidoreductase family.</text>
</comment>
<dbReference type="EC" id="1.6.1.1" evidence="1"/>
<dbReference type="EMBL" id="FM209186">
    <property type="protein sequence ID" value="CAW26798.1"/>
    <property type="molecule type" value="Genomic_DNA"/>
</dbReference>
<dbReference type="RefSeq" id="WP_003091177.1">
    <property type="nucleotide sequence ID" value="NC_011770.1"/>
</dbReference>
<dbReference type="SMR" id="B7UZU5"/>
<dbReference type="KEGG" id="pag:PLES_20711"/>
<dbReference type="HOGENOM" id="CLU_016755_0_0_6"/>
<dbReference type="GO" id="GO:0005829">
    <property type="term" value="C:cytosol"/>
    <property type="evidence" value="ECO:0007669"/>
    <property type="project" value="TreeGrafter"/>
</dbReference>
<dbReference type="GO" id="GO:0004148">
    <property type="term" value="F:dihydrolipoyl dehydrogenase (NADH) activity"/>
    <property type="evidence" value="ECO:0007669"/>
    <property type="project" value="TreeGrafter"/>
</dbReference>
<dbReference type="GO" id="GO:0050660">
    <property type="term" value="F:flavin adenine dinucleotide binding"/>
    <property type="evidence" value="ECO:0007669"/>
    <property type="project" value="TreeGrafter"/>
</dbReference>
<dbReference type="GO" id="GO:0003957">
    <property type="term" value="F:NAD(P)+ transhydrogenase (Si-specific) activity"/>
    <property type="evidence" value="ECO:0007669"/>
    <property type="project" value="UniProtKB-UniRule"/>
</dbReference>
<dbReference type="GO" id="GO:0006103">
    <property type="term" value="P:2-oxoglutarate metabolic process"/>
    <property type="evidence" value="ECO:0007669"/>
    <property type="project" value="TreeGrafter"/>
</dbReference>
<dbReference type="GO" id="GO:0006739">
    <property type="term" value="P:NADP metabolic process"/>
    <property type="evidence" value="ECO:0007669"/>
    <property type="project" value="UniProtKB-UniRule"/>
</dbReference>
<dbReference type="FunFam" id="3.30.390.30:FF:000002">
    <property type="entry name" value="Soluble pyridine nucleotide transhydrogenase"/>
    <property type="match status" value="1"/>
</dbReference>
<dbReference type="FunFam" id="3.50.50.60:FF:000008">
    <property type="entry name" value="Soluble pyridine nucleotide transhydrogenase"/>
    <property type="match status" value="1"/>
</dbReference>
<dbReference type="Gene3D" id="3.30.390.30">
    <property type="match status" value="1"/>
</dbReference>
<dbReference type="Gene3D" id="3.50.50.60">
    <property type="entry name" value="FAD/NAD(P)-binding domain"/>
    <property type="match status" value="2"/>
</dbReference>
<dbReference type="HAMAP" id="MF_00247">
    <property type="entry name" value="SthA"/>
    <property type="match status" value="1"/>
</dbReference>
<dbReference type="InterPro" id="IPR050151">
    <property type="entry name" value="Class-I_Pyr_Nuc-Dis_Oxidored"/>
</dbReference>
<dbReference type="InterPro" id="IPR036188">
    <property type="entry name" value="FAD/NAD-bd_sf"/>
</dbReference>
<dbReference type="InterPro" id="IPR023753">
    <property type="entry name" value="FAD/NAD-binding_dom"/>
</dbReference>
<dbReference type="InterPro" id="IPR016156">
    <property type="entry name" value="FAD/NAD-linked_Rdtase_dimer_sf"/>
</dbReference>
<dbReference type="InterPro" id="IPR001100">
    <property type="entry name" value="Pyr_nuc-diS_OxRdtase"/>
</dbReference>
<dbReference type="InterPro" id="IPR004099">
    <property type="entry name" value="Pyr_nucl-diS_OxRdtase_dimer"/>
</dbReference>
<dbReference type="InterPro" id="IPR022962">
    <property type="entry name" value="STH_gammaproteobact"/>
</dbReference>
<dbReference type="NCBIfam" id="NF003585">
    <property type="entry name" value="PRK05249.1"/>
    <property type="match status" value="1"/>
</dbReference>
<dbReference type="PANTHER" id="PTHR22912">
    <property type="entry name" value="DISULFIDE OXIDOREDUCTASE"/>
    <property type="match status" value="1"/>
</dbReference>
<dbReference type="PANTHER" id="PTHR22912:SF93">
    <property type="entry name" value="SOLUBLE PYRIDINE NUCLEOTIDE TRANSHYDROGENASE"/>
    <property type="match status" value="1"/>
</dbReference>
<dbReference type="Pfam" id="PF07992">
    <property type="entry name" value="Pyr_redox_2"/>
    <property type="match status" value="1"/>
</dbReference>
<dbReference type="Pfam" id="PF02852">
    <property type="entry name" value="Pyr_redox_dim"/>
    <property type="match status" value="1"/>
</dbReference>
<dbReference type="PIRSF" id="PIRSF000350">
    <property type="entry name" value="Mercury_reductase_MerA"/>
    <property type="match status" value="1"/>
</dbReference>
<dbReference type="PRINTS" id="PR00368">
    <property type="entry name" value="FADPNR"/>
</dbReference>
<dbReference type="PRINTS" id="PR00411">
    <property type="entry name" value="PNDRDTASEI"/>
</dbReference>
<dbReference type="SUPFAM" id="SSF51905">
    <property type="entry name" value="FAD/NAD(P)-binding domain"/>
    <property type="match status" value="1"/>
</dbReference>
<dbReference type="SUPFAM" id="SSF55424">
    <property type="entry name" value="FAD/NAD-linked reductases, dimerisation (C-terminal) domain"/>
    <property type="match status" value="1"/>
</dbReference>
<reference key="1">
    <citation type="journal article" date="2009" name="Genome Res.">
        <title>Newly introduced genomic prophage islands are critical determinants of in vivo competitiveness in the Liverpool epidemic strain of Pseudomonas aeruginosa.</title>
        <authorList>
            <person name="Winstanley C."/>
            <person name="Langille M.G.I."/>
            <person name="Fothergill J.L."/>
            <person name="Kukavica-Ibrulj I."/>
            <person name="Paradis-Bleau C."/>
            <person name="Sanschagrin F."/>
            <person name="Thomson N.R."/>
            <person name="Winsor G.L."/>
            <person name="Quail M.A."/>
            <person name="Lennard N."/>
            <person name="Bignell A."/>
            <person name="Clarke L."/>
            <person name="Seeger K."/>
            <person name="Saunders D."/>
            <person name="Harris D."/>
            <person name="Parkhill J."/>
            <person name="Hancock R.E.W."/>
            <person name="Brinkman F.S.L."/>
            <person name="Levesque R.C."/>
        </authorList>
    </citation>
    <scope>NUCLEOTIDE SEQUENCE [LARGE SCALE GENOMIC DNA]</scope>
    <source>
        <strain>LESB58</strain>
    </source>
</reference>
<protein>
    <recommendedName>
        <fullName evidence="1">Soluble pyridine nucleotide transhydrogenase</fullName>
        <shortName evidence="1">STH</shortName>
        <ecNumber evidence="1">1.6.1.1</ecNumber>
    </recommendedName>
    <alternativeName>
        <fullName evidence="1">NAD(P)(+) transhydrogenase [B-specific]</fullName>
    </alternativeName>
</protein>
<feature type="chain" id="PRO_1000193458" description="Soluble pyridine nucleotide transhydrogenase">
    <location>
        <begin position="1"/>
        <end position="464"/>
    </location>
</feature>
<feature type="binding site" evidence="1">
    <location>
        <begin position="35"/>
        <end position="44"/>
    </location>
    <ligand>
        <name>FAD</name>
        <dbReference type="ChEBI" id="CHEBI:57692"/>
    </ligand>
</feature>
<sequence>MAVYNYDVVILGTGPAGEGAAMNASKYGRKLAVVDSRRVVGGNCTHLGTIPSKALRHSVKQIIEFNTNPMFRQIGEPRWFSFPDVLKSADRVISKQVASRTGYYARNRIDMFTGTASFVDERTVEVVTPSGAVERLVADQFVIATGSRPYRPSDINFNHPRVYDSDTILSLSHTPRRLIIYGAGVIGCEYASIFSGLGVLVDLIDTRDQLLSFLDDEISDALSYHLRNNNVLIRHNEEYERVEGLDNGVILHLKSGKKIKADALLWCNGRTGNTDKLGLENVGIKVNSRGQIEVDENYRTSVSNIFAAGDVIGWPSLASAAYDQGRSAAGNIVESDSWRFVNDVPTGIYTIPEISSIGKNESELTAAKIPYEVGKAFFKGMARAQISNEPVGMLKILFHRETLEILGVHCFGDQASEIVHIGQAIMNQPGELNTLKYFVNTTFNYPTMAEAYRVAAFDGLNRLF</sequence>
<name>STHA_PSEA8</name>
<evidence type="ECO:0000255" key="1">
    <source>
        <dbReference type="HAMAP-Rule" id="MF_00247"/>
    </source>
</evidence>
<organism>
    <name type="scientific">Pseudomonas aeruginosa (strain LESB58)</name>
    <dbReference type="NCBI Taxonomy" id="557722"/>
    <lineage>
        <taxon>Bacteria</taxon>
        <taxon>Pseudomonadati</taxon>
        <taxon>Pseudomonadota</taxon>
        <taxon>Gammaproteobacteria</taxon>
        <taxon>Pseudomonadales</taxon>
        <taxon>Pseudomonadaceae</taxon>
        <taxon>Pseudomonas</taxon>
    </lineage>
</organism>
<proteinExistence type="inferred from homology"/>